<proteinExistence type="evidence at protein level"/>
<dbReference type="EC" id="1.1.1.77"/>
<dbReference type="EMBL" id="M31059">
    <property type="protein sequence ID" value="AAA23824.1"/>
    <property type="status" value="ALT_INIT"/>
    <property type="molecule type" value="Genomic_DNA"/>
</dbReference>
<dbReference type="EMBL" id="X15025">
    <property type="protein sequence ID" value="CAA33124.1"/>
    <property type="status" value="ALT_INIT"/>
    <property type="molecule type" value="Genomic_DNA"/>
</dbReference>
<dbReference type="EMBL" id="M27177">
    <property type="protein sequence ID" value="AAA23825.1"/>
    <property type="status" value="ALT_INIT"/>
    <property type="molecule type" value="Genomic_DNA"/>
</dbReference>
<dbReference type="EMBL" id="U29581">
    <property type="protein sequence ID" value="AAB40449.1"/>
    <property type="status" value="ALT_INIT"/>
    <property type="molecule type" value="Genomic_DNA"/>
</dbReference>
<dbReference type="EMBL" id="U00096">
    <property type="protein sequence ID" value="AAC75841.2"/>
    <property type="molecule type" value="Genomic_DNA"/>
</dbReference>
<dbReference type="EMBL" id="AP009048">
    <property type="protein sequence ID" value="BAE76871.1"/>
    <property type="status" value="ALT_INIT"/>
    <property type="molecule type" value="Genomic_DNA"/>
</dbReference>
<dbReference type="EMBL" id="L07763">
    <property type="status" value="NOT_ANNOTATED_CDS"/>
    <property type="molecule type" value="Genomic_DNA"/>
</dbReference>
<dbReference type="PIR" id="A32883">
    <property type="entry name" value="RDECLA"/>
</dbReference>
<dbReference type="RefSeq" id="NP_417279.2">
    <property type="nucleotide sequence ID" value="NC_000913.3"/>
</dbReference>
<dbReference type="RefSeq" id="WP_000013588.1">
    <property type="nucleotide sequence ID" value="NZ_STEB01000030.1"/>
</dbReference>
<dbReference type="PDB" id="1RRM">
    <property type="method" value="X-ray"/>
    <property type="resolution" value="1.60 A"/>
    <property type="chains" value="A/B=1-382"/>
</dbReference>
<dbReference type="PDB" id="2BI4">
    <property type="method" value="X-ray"/>
    <property type="resolution" value="2.85 A"/>
    <property type="chains" value="A/B=1-382"/>
</dbReference>
<dbReference type="PDB" id="2BL4">
    <property type="method" value="X-ray"/>
    <property type="resolution" value="2.85 A"/>
    <property type="chains" value="A/B=1-382"/>
</dbReference>
<dbReference type="PDB" id="5BR4">
    <property type="method" value="X-ray"/>
    <property type="resolution" value="0.91 A"/>
    <property type="chains" value="A/B=1-382"/>
</dbReference>
<dbReference type="PDB" id="7QLG">
    <property type="method" value="X-ray"/>
    <property type="resolution" value="2.00 A"/>
    <property type="chains" value="AAA/BBB=1-382"/>
</dbReference>
<dbReference type="PDB" id="7QLQ">
    <property type="method" value="X-ray"/>
    <property type="resolution" value="2.60 A"/>
    <property type="chains" value="AAA/BBB=1-382"/>
</dbReference>
<dbReference type="PDB" id="7QLS">
    <property type="method" value="X-ray"/>
    <property type="resolution" value="2.40 A"/>
    <property type="chains" value="AAA/BBB=1-382"/>
</dbReference>
<dbReference type="PDB" id="7QNF">
    <property type="method" value="X-ray"/>
    <property type="resolution" value="2.14 A"/>
    <property type="chains" value="AAA/BBB=1-382"/>
</dbReference>
<dbReference type="PDB" id="7QNH">
    <property type="method" value="X-ray"/>
    <property type="resolution" value="2.20 A"/>
    <property type="chains" value="AAA/BBB=1-382"/>
</dbReference>
<dbReference type="PDB" id="7QNI">
    <property type="method" value="X-ray"/>
    <property type="resolution" value="1.73 A"/>
    <property type="chains" value="AAA=1-382"/>
</dbReference>
<dbReference type="PDB" id="7QNJ">
    <property type="method" value="X-ray"/>
    <property type="resolution" value="1.66 A"/>
    <property type="chains" value="AAA/BBB=1-382"/>
</dbReference>
<dbReference type="PDB" id="7R0P">
    <property type="method" value="X-ray"/>
    <property type="resolution" value="1.60 A"/>
    <property type="chains" value="AAA/BBB=1-382"/>
</dbReference>
<dbReference type="PDB" id="7R3D">
    <property type="method" value="X-ray"/>
    <property type="resolution" value="1.40 A"/>
    <property type="chains" value="AAA/BBB=1-382"/>
</dbReference>
<dbReference type="PDB" id="7R5T">
    <property type="method" value="X-ray"/>
    <property type="resolution" value="1.85 A"/>
    <property type="chains" value="AAA/BBB=1-382"/>
</dbReference>
<dbReference type="PDBsum" id="1RRM"/>
<dbReference type="PDBsum" id="2BI4"/>
<dbReference type="PDBsum" id="2BL4"/>
<dbReference type="PDBsum" id="5BR4"/>
<dbReference type="PDBsum" id="7QLG"/>
<dbReference type="PDBsum" id="7QLQ"/>
<dbReference type="PDBsum" id="7QLS"/>
<dbReference type="PDBsum" id="7QNF"/>
<dbReference type="PDBsum" id="7QNH"/>
<dbReference type="PDBsum" id="7QNI"/>
<dbReference type="PDBsum" id="7QNJ"/>
<dbReference type="PDBsum" id="7R0P"/>
<dbReference type="PDBsum" id="7R3D"/>
<dbReference type="PDBsum" id="7R5T"/>
<dbReference type="SMR" id="P0A9S1"/>
<dbReference type="BioGRID" id="4259223">
    <property type="interactions" value="94"/>
</dbReference>
<dbReference type="BioGRID" id="851603">
    <property type="interactions" value="2"/>
</dbReference>
<dbReference type="DIP" id="DIP-48076N"/>
<dbReference type="FunCoup" id="P0A9S1">
    <property type="interactions" value="761"/>
</dbReference>
<dbReference type="IntAct" id="P0A9S1">
    <property type="interactions" value="5"/>
</dbReference>
<dbReference type="STRING" id="511145.b2799"/>
<dbReference type="DrugBank" id="DB02059">
    <property type="generic name" value="Adenosine-5-Diphosphoribose"/>
</dbReference>
<dbReference type="jPOST" id="P0A9S1"/>
<dbReference type="PaxDb" id="511145-b2799"/>
<dbReference type="EnsemblBacteria" id="AAC75841">
    <property type="protein sequence ID" value="AAC75841"/>
    <property type="gene ID" value="b2799"/>
</dbReference>
<dbReference type="GeneID" id="93779199"/>
<dbReference type="GeneID" id="947273"/>
<dbReference type="KEGG" id="ecj:JW2770"/>
<dbReference type="KEGG" id="eco:b2799"/>
<dbReference type="KEGG" id="ecoc:C3026_15390"/>
<dbReference type="PATRIC" id="fig|1411691.4.peg.3934"/>
<dbReference type="EchoBASE" id="EB0347"/>
<dbReference type="eggNOG" id="COG1454">
    <property type="taxonomic scope" value="Bacteria"/>
</dbReference>
<dbReference type="HOGENOM" id="CLU_007207_0_0_6"/>
<dbReference type="InParanoid" id="P0A9S1"/>
<dbReference type="OMA" id="MNGFDKG"/>
<dbReference type="OrthoDB" id="9815791at2"/>
<dbReference type="PhylomeDB" id="P0A9S1"/>
<dbReference type="BioCyc" id="EcoCyc:LACTALDREDUCT-MONOMER"/>
<dbReference type="BioCyc" id="MetaCyc:LACTALDREDUCT-MONOMER"/>
<dbReference type="UniPathway" id="UPA00563"/>
<dbReference type="EvolutionaryTrace" id="P0A9S1"/>
<dbReference type="PRO" id="PR:P0A9S1"/>
<dbReference type="Proteomes" id="UP000000625">
    <property type="component" value="Chromosome"/>
</dbReference>
<dbReference type="GO" id="GO:0005829">
    <property type="term" value="C:cytosol"/>
    <property type="evidence" value="ECO:0000314"/>
    <property type="project" value="EcoCyc"/>
</dbReference>
<dbReference type="GO" id="GO:0004022">
    <property type="term" value="F:alcohol dehydrogenase (NAD+) activity"/>
    <property type="evidence" value="ECO:0000318"/>
    <property type="project" value="GO_Central"/>
</dbReference>
<dbReference type="GO" id="GO:0008198">
    <property type="term" value="F:ferrous iron binding"/>
    <property type="evidence" value="ECO:0000314"/>
    <property type="project" value="EcoCyc"/>
</dbReference>
<dbReference type="GO" id="GO:0008912">
    <property type="term" value="F:lactaldehyde reductase activity"/>
    <property type="evidence" value="ECO:0000314"/>
    <property type="project" value="EcoCyc"/>
</dbReference>
<dbReference type="GO" id="GO:0000166">
    <property type="term" value="F:nucleotide binding"/>
    <property type="evidence" value="ECO:0007669"/>
    <property type="project" value="UniProtKB-KW"/>
</dbReference>
<dbReference type="GO" id="GO:0042803">
    <property type="term" value="F:protein homodimerization activity"/>
    <property type="evidence" value="ECO:0000314"/>
    <property type="project" value="EcoCyc"/>
</dbReference>
<dbReference type="GO" id="GO:0052660">
    <property type="term" value="F:R-lactaldehyde reductase activity"/>
    <property type="evidence" value="ECO:0007669"/>
    <property type="project" value="RHEA"/>
</dbReference>
<dbReference type="GO" id="GO:0052661">
    <property type="term" value="F:S-lactaldehyde reductase activity"/>
    <property type="evidence" value="ECO:0007669"/>
    <property type="project" value="RHEA"/>
</dbReference>
<dbReference type="GO" id="GO:0042846">
    <property type="term" value="P:glycol catabolic process"/>
    <property type="evidence" value="ECO:0000314"/>
    <property type="project" value="EcoCyc"/>
</dbReference>
<dbReference type="GO" id="GO:0042355">
    <property type="term" value="P:L-fucose catabolic process"/>
    <property type="evidence" value="ECO:0000315"/>
    <property type="project" value="EcoCyc"/>
</dbReference>
<dbReference type="GO" id="GO:0051143">
    <property type="term" value="P:propanediol metabolic process"/>
    <property type="evidence" value="ECO:0000314"/>
    <property type="project" value="EcoCyc"/>
</dbReference>
<dbReference type="GO" id="GO:0019301">
    <property type="term" value="P:rhamnose catabolic process"/>
    <property type="evidence" value="ECO:0000270"/>
    <property type="project" value="EcoCyc"/>
</dbReference>
<dbReference type="CDD" id="cd08176">
    <property type="entry name" value="LPO"/>
    <property type="match status" value="1"/>
</dbReference>
<dbReference type="FunFam" id="3.40.50.1970:FF:000003">
    <property type="entry name" value="Alcohol dehydrogenase, iron-containing"/>
    <property type="match status" value="1"/>
</dbReference>
<dbReference type="FunFam" id="1.20.1090.10:FF:000001">
    <property type="entry name" value="Aldehyde-alcohol dehydrogenase"/>
    <property type="match status" value="1"/>
</dbReference>
<dbReference type="Gene3D" id="3.40.50.1970">
    <property type="match status" value="1"/>
</dbReference>
<dbReference type="Gene3D" id="1.20.1090.10">
    <property type="entry name" value="Dehydroquinate synthase-like - alpha domain"/>
    <property type="match status" value="1"/>
</dbReference>
<dbReference type="InterPro" id="IPR001670">
    <property type="entry name" value="ADH_Fe/GldA"/>
</dbReference>
<dbReference type="InterPro" id="IPR056798">
    <property type="entry name" value="ADH_Fe_C"/>
</dbReference>
<dbReference type="InterPro" id="IPR018211">
    <property type="entry name" value="ADH_Fe_CS"/>
</dbReference>
<dbReference type="InterPro" id="IPR039697">
    <property type="entry name" value="Alcohol_dehydrogenase_Fe"/>
</dbReference>
<dbReference type="InterPro" id="IPR013460">
    <property type="entry name" value="Lactal_redase"/>
</dbReference>
<dbReference type="NCBIfam" id="TIGR02638">
    <property type="entry name" value="lactal_redase"/>
    <property type="match status" value="1"/>
</dbReference>
<dbReference type="NCBIfam" id="NF007911">
    <property type="entry name" value="PRK10624.1"/>
    <property type="match status" value="1"/>
</dbReference>
<dbReference type="PANTHER" id="PTHR11496">
    <property type="entry name" value="ALCOHOL DEHYDROGENASE"/>
    <property type="match status" value="1"/>
</dbReference>
<dbReference type="PANTHER" id="PTHR11496:SF106">
    <property type="entry name" value="LACTALDEHYDE REDUCTASE"/>
    <property type="match status" value="1"/>
</dbReference>
<dbReference type="Pfam" id="PF25137">
    <property type="entry name" value="ADH_Fe_C"/>
    <property type="match status" value="1"/>
</dbReference>
<dbReference type="Pfam" id="PF00465">
    <property type="entry name" value="Fe-ADH"/>
    <property type="match status" value="1"/>
</dbReference>
<dbReference type="SUPFAM" id="SSF56796">
    <property type="entry name" value="Dehydroquinate synthase-like"/>
    <property type="match status" value="1"/>
</dbReference>
<dbReference type="PROSITE" id="PS00913">
    <property type="entry name" value="ADH_IRON_1"/>
    <property type="match status" value="1"/>
</dbReference>
<dbReference type="PROSITE" id="PS00060">
    <property type="entry name" value="ADH_IRON_2"/>
    <property type="match status" value="1"/>
</dbReference>
<name>FUCO_ECOLI</name>
<feature type="chain" id="PRO_0000087824" description="Lactaldehyde reductase">
    <location>
        <begin position="1"/>
        <end position="382"/>
    </location>
</feature>
<feature type="binding site" evidence="4 5 6">
    <location>
        <position position="38"/>
    </location>
    <ligand>
        <name>NAD(+)</name>
        <dbReference type="ChEBI" id="CHEBI:57540"/>
    </ligand>
</feature>
<feature type="binding site" evidence="4 5">
    <location>
        <position position="70"/>
    </location>
    <ligand>
        <name>NAD(+)</name>
        <dbReference type="ChEBI" id="CHEBI:57540"/>
    </ligand>
</feature>
<feature type="binding site" evidence="4 5 6">
    <location>
        <begin position="97"/>
        <end position="101"/>
    </location>
    <ligand>
        <name>NAD(+)</name>
        <dbReference type="ChEBI" id="CHEBI:57540"/>
    </ligand>
</feature>
<feature type="binding site" evidence="4 5 6">
    <location>
        <begin position="139"/>
        <end position="143"/>
    </location>
    <ligand>
        <name>NAD(+)</name>
        <dbReference type="ChEBI" id="CHEBI:57540"/>
    </ligand>
</feature>
<feature type="binding site" evidence="5 6">
    <location>
        <begin position="148"/>
        <end position="150"/>
    </location>
    <ligand>
        <name>NAD(+)</name>
        <dbReference type="ChEBI" id="CHEBI:57540"/>
    </ligand>
</feature>
<feature type="binding site" evidence="4 5 6">
    <location>
        <position position="161"/>
    </location>
    <ligand>
        <name>NAD(+)</name>
        <dbReference type="ChEBI" id="CHEBI:57540"/>
    </ligand>
</feature>
<feature type="binding site" evidence="4 5 6">
    <location>
        <begin position="180"/>
        <end position="184"/>
    </location>
    <ligand>
        <name>NAD(+)</name>
        <dbReference type="ChEBI" id="CHEBI:57540"/>
    </ligand>
</feature>
<feature type="binding site" evidence="3 4 5 6">
    <location>
        <position position="195"/>
    </location>
    <ligand>
        <name>Fe cation</name>
        <dbReference type="ChEBI" id="CHEBI:24875"/>
    </ligand>
</feature>
<feature type="binding site" evidence="3 4 5 6">
    <location>
        <position position="199"/>
    </location>
    <ligand>
        <name>Fe cation</name>
        <dbReference type="ChEBI" id="CHEBI:24875"/>
    </ligand>
</feature>
<feature type="binding site" evidence="3 4 5 6">
    <location>
        <position position="262"/>
    </location>
    <ligand>
        <name>Fe cation</name>
        <dbReference type="ChEBI" id="CHEBI:24875"/>
    </ligand>
</feature>
<feature type="binding site" evidence="3 4 5 6">
    <location>
        <position position="276"/>
    </location>
    <ligand>
        <name>Fe cation</name>
        <dbReference type="ChEBI" id="CHEBI:24875"/>
    </ligand>
</feature>
<feature type="binding site" evidence="4 5 6">
    <location>
        <position position="276"/>
    </location>
    <ligand>
        <name>NAD(+)</name>
        <dbReference type="ChEBI" id="CHEBI:57540"/>
    </ligand>
</feature>
<feature type="binding site" evidence="4 5">
    <location>
        <position position="341"/>
    </location>
    <ligand>
        <name>NAD(+)</name>
        <dbReference type="ChEBI" id="CHEBI:57540"/>
    </ligand>
</feature>
<feature type="mutagenesis site" description="Loss of enzyme activity, loss of dimerization." evidence="1">
    <original>MANRMILNE</original>
    <variation>M</variation>
    <location>
        <begin position="1"/>
        <end position="9"/>
    </location>
</feature>
<feature type="mutagenesis site" description="No effect on enzyme activity." evidence="1">
    <original>G</original>
    <variation>D</variation>
    <location>
        <position position="16"/>
    </location>
</feature>
<feature type="mutagenesis site" description="Enzyme can now use NADP." evidence="1">
    <original>D</original>
    <variation>G</variation>
    <location>
        <position position="38"/>
    </location>
</feature>
<feature type="mutagenesis site" description="Loss of NAD binding and enzyme activity." evidence="1">
    <original>G</original>
    <variation>E</variation>
    <location>
        <position position="96"/>
    </location>
</feature>
<feature type="mutagenesis site" description="Complete loss of iron-binding." evidence="1">
    <original>D</original>
    <variation>L</variation>
    <location>
        <position position="195"/>
    </location>
</feature>
<feature type="mutagenesis site" description="Complete loss of iron-binding." evidence="1">
    <original>H</original>
    <variation>A</variation>
    <variation>F</variation>
    <location>
        <position position="199"/>
    </location>
</feature>
<feature type="sequence conflict" description="In Ref. 2; CAA33124." evidence="2" ref="2">
    <original>N</original>
    <variation>T</variation>
    <location>
        <position position="273"/>
    </location>
</feature>
<feature type="strand" evidence="7">
    <location>
        <begin position="3"/>
        <end position="6"/>
    </location>
</feature>
<feature type="strand" evidence="9">
    <location>
        <begin position="9"/>
        <end position="14"/>
    </location>
</feature>
<feature type="helix" evidence="9">
    <location>
        <begin position="17"/>
        <end position="20"/>
    </location>
</feature>
<feature type="helix" evidence="9">
    <location>
        <begin position="21"/>
        <end position="28"/>
    </location>
</feature>
<feature type="strand" evidence="9">
    <location>
        <begin position="32"/>
        <end position="38"/>
    </location>
</feature>
<feature type="helix" evidence="9">
    <location>
        <begin position="39"/>
        <end position="43"/>
    </location>
</feature>
<feature type="helix" evidence="9">
    <location>
        <begin position="46"/>
        <end position="56"/>
    </location>
</feature>
<feature type="strand" evidence="9">
    <location>
        <begin position="60"/>
        <end position="67"/>
    </location>
</feature>
<feature type="helix" evidence="9">
    <location>
        <begin position="73"/>
        <end position="85"/>
    </location>
</feature>
<feature type="strand" evidence="9">
    <location>
        <begin position="89"/>
        <end position="96"/>
    </location>
</feature>
<feature type="helix" evidence="9">
    <location>
        <begin position="97"/>
        <end position="111"/>
    </location>
</feature>
<feature type="helix" evidence="9">
    <location>
        <begin position="113"/>
        <end position="115"/>
    </location>
</feature>
<feature type="helix" evidence="9">
    <location>
        <begin position="119"/>
        <end position="121"/>
    </location>
</feature>
<feature type="strand" evidence="7">
    <location>
        <begin position="122"/>
        <end position="124"/>
    </location>
</feature>
<feature type="strand" evidence="9">
    <location>
        <begin position="134"/>
        <end position="138"/>
    </location>
</feature>
<feature type="strand" evidence="7">
    <location>
        <begin position="140"/>
        <end position="142"/>
    </location>
</feature>
<feature type="turn" evidence="9">
    <location>
        <begin position="145"/>
        <end position="147"/>
    </location>
</feature>
<feature type="strand" evidence="9">
    <location>
        <begin position="149"/>
        <end position="155"/>
    </location>
</feature>
<feature type="turn" evidence="9">
    <location>
        <begin position="156"/>
        <end position="159"/>
    </location>
</feature>
<feature type="strand" evidence="9">
    <location>
        <begin position="160"/>
        <end position="165"/>
    </location>
</feature>
<feature type="helix" evidence="9">
    <location>
        <begin position="167"/>
        <end position="169"/>
    </location>
</feature>
<feature type="strand" evidence="9">
    <location>
        <begin position="172"/>
        <end position="176"/>
    </location>
</feature>
<feature type="helix" evidence="9">
    <location>
        <begin position="178"/>
        <end position="180"/>
    </location>
</feature>
<feature type="turn" evidence="9">
    <location>
        <begin position="181"/>
        <end position="183"/>
    </location>
</feature>
<feature type="helix" evidence="9">
    <location>
        <begin position="186"/>
        <end position="205"/>
    </location>
</feature>
<feature type="helix" evidence="9">
    <location>
        <begin position="211"/>
        <end position="232"/>
    </location>
</feature>
<feature type="helix" evidence="9">
    <location>
        <begin position="236"/>
        <end position="256"/>
    </location>
</feature>
<feature type="helix" evidence="9">
    <location>
        <begin position="260"/>
        <end position="272"/>
    </location>
</feature>
<feature type="helix" evidence="9">
    <location>
        <begin position="276"/>
        <end position="291"/>
    </location>
</feature>
<feature type="helix" evidence="9">
    <location>
        <begin position="292"/>
        <end position="294"/>
    </location>
</feature>
<feature type="helix" evidence="9">
    <location>
        <begin position="298"/>
        <end position="305"/>
    </location>
</feature>
<feature type="helix" evidence="9">
    <location>
        <begin position="315"/>
        <end position="333"/>
    </location>
</feature>
<feature type="helix" evidence="9">
    <location>
        <begin position="339"/>
        <end position="342"/>
    </location>
</feature>
<feature type="helix" evidence="9">
    <location>
        <begin position="346"/>
        <end position="348"/>
    </location>
</feature>
<feature type="helix" evidence="9">
    <location>
        <begin position="349"/>
        <end position="358"/>
    </location>
</feature>
<feature type="helix" evidence="9">
    <location>
        <begin position="360"/>
        <end position="364"/>
    </location>
</feature>
<feature type="strand" evidence="8">
    <location>
        <begin position="365"/>
        <end position="367"/>
    </location>
</feature>
<feature type="helix" evidence="9">
    <location>
        <begin position="371"/>
        <end position="382"/>
    </location>
</feature>
<protein>
    <recommendedName>
        <fullName>Lactaldehyde reductase</fullName>
        <ecNumber>1.1.1.77</ecNumber>
    </recommendedName>
    <alternativeName>
        <fullName>Propanediol oxidoreductase</fullName>
    </alternativeName>
</protein>
<accession>P0A9S1</accession>
<accession>P11549</accession>
<accession>Q2MA35</accession>
<keyword id="KW-0002">3D-structure</keyword>
<keyword id="KW-0119">Carbohydrate metabolism</keyword>
<keyword id="KW-0294">Fucose metabolism</keyword>
<keyword id="KW-0408">Iron</keyword>
<keyword id="KW-0479">Metal-binding</keyword>
<keyword id="KW-0520">NAD</keyword>
<keyword id="KW-0547">Nucleotide-binding</keyword>
<keyword id="KW-0560">Oxidoreductase</keyword>
<keyword id="KW-1185">Reference proteome</keyword>
<gene>
    <name type="primary">fucO</name>
    <name type="ordered locus">b2799</name>
    <name type="ordered locus">JW2770</name>
</gene>
<organism>
    <name type="scientific">Escherichia coli (strain K12)</name>
    <dbReference type="NCBI Taxonomy" id="83333"/>
    <lineage>
        <taxon>Bacteria</taxon>
        <taxon>Pseudomonadati</taxon>
        <taxon>Pseudomonadota</taxon>
        <taxon>Gammaproteobacteria</taxon>
        <taxon>Enterobacterales</taxon>
        <taxon>Enterobacteriaceae</taxon>
        <taxon>Escherichia</taxon>
    </lineage>
</organism>
<evidence type="ECO:0000269" key="1">
    <source>
    </source>
</evidence>
<evidence type="ECO:0000305" key="2"/>
<evidence type="ECO:0007744" key="3">
    <source>
        <dbReference type="PDB" id="1RRM"/>
    </source>
</evidence>
<evidence type="ECO:0007744" key="4">
    <source>
        <dbReference type="PDB" id="2BI4"/>
    </source>
</evidence>
<evidence type="ECO:0007744" key="5">
    <source>
        <dbReference type="PDB" id="2BL4"/>
    </source>
</evidence>
<evidence type="ECO:0007744" key="6">
    <source>
        <dbReference type="PDB" id="5BR4"/>
    </source>
</evidence>
<evidence type="ECO:0007829" key="7">
    <source>
        <dbReference type="PDB" id="1RRM"/>
    </source>
</evidence>
<evidence type="ECO:0007829" key="8">
    <source>
        <dbReference type="PDB" id="2BL4"/>
    </source>
</evidence>
<evidence type="ECO:0007829" key="9">
    <source>
        <dbReference type="PDB" id="5BR4"/>
    </source>
</evidence>
<sequence length="382" mass="40513">MANRMILNETAWFGRGAVGALTDEVKRRGYQKALIVTDKTLVQCGVVAKVTDKMDAAGLAWAIYDGVVPNPTITVVKEGLGVFQNSGADYLIAIGGGSPQDTCKAIGIISNNPEFADVRSLEGLSPTNKPSVPILAIPTTAGTAAEVTINYVITDEEKRRKFVCVDPHDIPQVAFIDADMMDGMPPALKAATGVDALTHAIEGYITRGAWALTDALHIKAIEIIAGALRGSVAGDKDAGEEMALGQYVAGMGFSNVGLGLVHGMAHPLGAFYNTPHGVANAILLPHVMRYNADFTGEKYRDIARVMGVKVEGMSLEEARNAAVEAVFALNRDVGIPPHLRDVGVRKEDIPALAQAALDDVCTGGNPREATLEDIVELYHTAW</sequence>
<comment type="catalytic activity">
    <reaction>
        <text>(R)-propane-1,2-diol + NAD(+) = (R)-lactaldehyde + NADH + H(+)</text>
        <dbReference type="Rhea" id="RHEA:23872"/>
        <dbReference type="ChEBI" id="CHEBI:15378"/>
        <dbReference type="ChEBI" id="CHEBI:17167"/>
        <dbReference type="ChEBI" id="CHEBI:28972"/>
        <dbReference type="ChEBI" id="CHEBI:57540"/>
        <dbReference type="ChEBI" id="CHEBI:57945"/>
        <dbReference type="EC" id="1.1.1.77"/>
    </reaction>
</comment>
<comment type="catalytic activity">
    <reaction>
        <text>(S)-propane-1,2-diol + NAD(+) = (S)-lactaldehyde + NADH + H(+)</text>
        <dbReference type="Rhea" id="RHEA:15933"/>
        <dbReference type="ChEBI" id="CHEBI:15378"/>
        <dbReference type="ChEBI" id="CHEBI:18041"/>
        <dbReference type="ChEBI" id="CHEBI:29002"/>
        <dbReference type="ChEBI" id="CHEBI:57540"/>
        <dbReference type="ChEBI" id="CHEBI:57945"/>
        <dbReference type="EC" id="1.1.1.77"/>
    </reaction>
</comment>
<comment type="cofactor">
    <cofactor evidence="1">
        <name>Fe cation</name>
        <dbReference type="ChEBI" id="CHEBI:24875"/>
    </cofactor>
</comment>
<comment type="activity regulation">
    <text evidence="1">Inhibited by Zn(2+).</text>
</comment>
<comment type="pathway">
    <text>Carbohydrate degradation; L-fucose degradation.</text>
</comment>
<comment type="subunit">
    <text evidence="1">Homodimer.</text>
</comment>
<comment type="similarity">
    <text evidence="2">Belongs to the iron-containing alcohol dehydrogenase family.</text>
</comment>
<comment type="sequence caution" evidence="2">
    <conflict type="erroneous initiation">
        <sequence resource="EMBL-CDS" id="AAA23824"/>
    </conflict>
    <text>Extended N-terminus.</text>
</comment>
<comment type="sequence caution" evidence="2">
    <conflict type="erroneous initiation">
        <sequence resource="EMBL-CDS" id="AAA23825"/>
    </conflict>
    <text>Extended N-terminus.</text>
</comment>
<comment type="sequence caution" evidence="2">
    <conflict type="erroneous initiation">
        <sequence resource="EMBL-CDS" id="AAB40449"/>
    </conflict>
    <text>Extended N-terminus.</text>
</comment>
<comment type="sequence caution" evidence="2">
    <conflict type="erroneous initiation">
        <sequence resource="EMBL-CDS" id="BAE76871"/>
    </conflict>
    <text>Extended N-terminus.</text>
</comment>
<comment type="sequence caution" evidence="2">
    <conflict type="erroneous initiation">
        <sequence resource="EMBL-CDS" id="CAA33124"/>
    </conflict>
    <text>Extended N-terminus.</text>
</comment>
<reference key="1">
    <citation type="journal article" date="1989" name="J. Bacteriol.">
        <title>Constitutive activation of the fucAO operon and silencing of the divergently transcribed fucPIK operon by an IS5 element in Escherichia coli mutants selected for growth on L-1,2-propanediol.</title>
        <authorList>
            <person name="Chen Y.M."/>
            <person name="Lu Z."/>
            <person name="Lin E.C.C."/>
        </authorList>
    </citation>
    <scope>NUCLEOTIDE SEQUENCE [GENOMIC DNA]</scope>
    <source>
        <strain>K12</strain>
    </source>
</reference>
<reference key="2">
    <citation type="journal article" date="1989" name="Nucleic Acids Res.">
        <title>The nucleotide sequence of Escherichia coli genes for L-fucose dissimilation.</title>
        <authorList>
            <person name="Lu Z."/>
            <person name="Lin E.C.C."/>
        </authorList>
    </citation>
    <scope>NUCLEOTIDE SEQUENCE [GENOMIC DNA]</scope>
    <source>
        <strain>K12</strain>
    </source>
</reference>
<reference key="3">
    <citation type="journal article" date="1989" name="J. Bacteriol.">
        <title>Similarity of Escherichia coli propanediol oxidoreductase (fucO product) and an unusual alcohol dehydrogenase from Zymomonas mobilis and Saccharomyces cerevisiae.</title>
        <authorList>
            <person name="Conway T."/>
            <person name="Ingram L.O."/>
        </authorList>
    </citation>
    <scope>NUCLEOTIDE SEQUENCE [GENOMIC DNA]</scope>
    <source>
        <strain>K12</strain>
    </source>
</reference>
<reference key="4">
    <citation type="journal article" date="1997" name="Science">
        <title>The complete genome sequence of Escherichia coli K-12.</title>
        <authorList>
            <person name="Blattner F.R."/>
            <person name="Plunkett G. III"/>
            <person name="Bloch C.A."/>
            <person name="Perna N.T."/>
            <person name="Burland V."/>
            <person name="Riley M."/>
            <person name="Collado-Vides J."/>
            <person name="Glasner J.D."/>
            <person name="Rode C.K."/>
            <person name="Mayhew G.F."/>
            <person name="Gregor J."/>
            <person name="Davis N.W."/>
            <person name="Kirkpatrick H.A."/>
            <person name="Goeden M.A."/>
            <person name="Rose D.J."/>
            <person name="Mau B."/>
            <person name="Shao Y."/>
        </authorList>
    </citation>
    <scope>NUCLEOTIDE SEQUENCE [LARGE SCALE GENOMIC DNA]</scope>
    <source>
        <strain>K12 / MG1655 / ATCC 47076</strain>
    </source>
</reference>
<reference key="5">
    <citation type="journal article" date="2006" name="Mol. Syst. Biol.">
        <title>Highly accurate genome sequences of Escherichia coli K-12 strains MG1655 and W3110.</title>
        <authorList>
            <person name="Hayashi K."/>
            <person name="Morooka N."/>
            <person name="Yamamoto Y."/>
            <person name="Fujita K."/>
            <person name="Isono K."/>
            <person name="Choi S."/>
            <person name="Ohtsubo E."/>
            <person name="Baba T."/>
            <person name="Wanner B.L."/>
            <person name="Mori H."/>
            <person name="Horiuchi T."/>
        </authorList>
    </citation>
    <scope>NUCLEOTIDE SEQUENCE [LARGE SCALE GENOMIC DNA]</scope>
    <source>
        <strain>K12 / W3110 / ATCC 27325 / DSM 5911</strain>
    </source>
</reference>
<reference key="6">
    <citation type="journal article" date="1993" name="Eur. J. Biochem.">
        <title>Sequencing and characterization of the sdaB gene from Escherichia coli K-12.</title>
        <authorList>
            <person name="Shao Z."/>
            <person name="Newman E.B."/>
        </authorList>
    </citation>
    <scope>NUCLEOTIDE SEQUENCE [GENOMIC DNA] OF 352-382</scope>
    <source>
        <strain>K12</strain>
    </source>
</reference>
<reference evidence="4 5" key="7">
    <citation type="journal article" date="2005" name="J. Bacteriol.">
        <title>Crystal structure of an iron-dependent group III dehydrogenase that interconverts L-lactaldehyde and L-1,2-propanediol in Escherichia coli.</title>
        <authorList>
            <person name="Montella C."/>
            <person name="Bellsolell L."/>
            <person name="Perez-Luque R."/>
            <person name="Badia J."/>
            <person name="Baldoma L."/>
            <person name="Coll M."/>
            <person name="Aguilar J."/>
        </authorList>
    </citation>
    <scope>X-RAY CRYSTALLOGRAPHY (2.85 ANGSTROMS) IN COMPLEX WITH NAD(+)</scope>
    <scope>COFACTOR</scope>
    <scope>SUBUNIT</scope>
    <scope>ACTIVITY REGULATION</scope>
    <scope>MUTAGENESIS OF 1-MET--ASN-9; GLY-16; ASP-38; GLY-96; ASP-195 AND HIS-199</scope>
    <source>
        <strain>K12 / ECL1</strain>
    </source>
</reference>
<reference key="8">
    <citation type="submission" date="2009-02" db="PDB data bank">
        <title>Crystal structure of lactaldehyde reductase.</title>
        <authorList>
            <consortium name="New York structural genomix research consortium (NYSGXRC)"/>
        </authorList>
    </citation>
    <scope>X-RAY CRYSTALLOGRAPHY (1.6 ANGSTROMS)</scope>
</reference>